<reference key="1">
    <citation type="journal article" date="2006" name="J. Bacteriol.">
        <title>Pathogenomic sequence analysis of Bacillus cereus and Bacillus thuringiensis isolates closely related to Bacillus anthracis.</title>
        <authorList>
            <person name="Han C.S."/>
            <person name="Xie G."/>
            <person name="Challacombe J.F."/>
            <person name="Altherr M.R."/>
            <person name="Bhotika S.S."/>
            <person name="Bruce D."/>
            <person name="Campbell C.S."/>
            <person name="Campbell M.L."/>
            <person name="Chen J."/>
            <person name="Chertkov O."/>
            <person name="Cleland C."/>
            <person name="Dimitrijevic M."/>
            <person name="Doggett N.A."/>
            <person name="Fawcett J.J."/>
            <person name="Glavina T."/>
            <person name="Goodwin L.A."/>
            <person name="Hill K.K."/>
            <person name="Hitchcock P."/>
            <person name="Jackson P.J."/>
            <person name="Keim P."/>
            <person name="Kewalramani A.R."/>
            <person name="Longmire J."/>
            <person name="Lucas S."/>
            <person name="Malfatti S."/>
            <person name="McMurry K."/>
            <person name="Meincke L.J."/>
            <person name="Misra M."/>
            <person name="Moseman B.L."/>
            <person name="Mundt M."/>
            <person name="Munk A.C."/>
            <person name="Okinaka R.T."/>
            <person name="Parson-Quintana B."/>
            <person name="Reilly L.P."/>
            <person name="Richardson P."/>
            <person name="Robinson D.L."/>
            <person name="Rubin E."/>
            <person name="Saunders E."/>
            <person name="Tapia R."/>
            <person name="Tesmer J.G."/>
            <person name="Thayer N."/>
            <person name="Thompson L.S."/>
            <person name="Tice H."/>
            <person name="Ticknor L.O."/>
            <person name="Wills P.L."/>
            <person name="Brettin T.S."/>
            <person name="Gilna P."/>
        </authorList>
    </citation>
    <scope>NUCLEOTIDE SEQUENCE [LARGE SCALE GENOMIC DNA]</scope>
    <source>
        <strain>ZK / E33L</strain>
    </source>
</reference>
<gene>
    <name evidence="1" type="primary">aroC2</name>
    <name type="ordered locus">BCE33L2676</name>
</gene>
<accession>Q63A04</accession>
<feature type="chain" id="PRO_0000140546" description="Chorismate synthase 2">
    <location>
        <begin position="1"/>
        <end position="390"/>
    </location>
</feature>
<feature type="binding site" evidence="1">
    <location>
        <position position="39"/>
    </location>
    <ligand>
        <name>NADP(+)</name>
        <dbReference type="ChEBI" id="CHEBI:58349"/>
    </ligand>
</feature>
<feature type="binding site" evidence="1">
    <location>
        <position position="45"/>
    </location>
    <ligand>
        <name>NADP(+)</name>
        <dbReference type="ChEBI" id="CHEBI:58349"/>
    </ligand>
</feature>
<feature type="binding site" evidence="1">
    <location>
        <begin position="132"/>
        <end position="134"/>
    </location>
    <ligand>
        <name>FMN</name>
        <dbReference type="ChEBI" id="CHEBI:58210"/>
    </ligand>
</feature>
<feature type="binding site" evidence="1">
    <location>
        <begin position="253"/>
        <end position="254"/>
    </location>
    <ligand>
        <name>FMN</name>
        <dbReference type="ChEBI" id="CHEBI:58210"/>
    </ligand>
</feature>
<feature type="binding site" evidence="1">
    <location>
        <position position="298"/>
    </location>
    <ligand>
        <name>FMN</name>
        <dbReference type="ChEBI" id="CHEBI:58210"/>
    </ligand>
</feature>
<feature type="binding site" evidence="1">
    <location>
        <begin position="313"/>
        <end position="317"/>
    </location>
    <ligand>
        <name>FMN</name>
        <dbReference type="ChEBI" id="CHEBI:58210"/>
    </ligand>
</feature>
<feature type="binding site" evidence="1">
    <location>
        <position position="339"/>
    </location>
    <ligand>
        <name>FMN</name>
        <dbReference type="ChEBI" id="CHEBI:58210"/>
    </ligand>
</feature>
<comment type="function">
    <text evidence="1">Catalyzes the anti-1,4-elimination of the C-3 phosphate and the C-6 proR hydrogen from 5-enolpyruvylshikimate-3-phosphate (EPSP) to yield chorismate, which is the branch point compound that serves as the starting substrate for the three terminal pathways of aromatic amino acid biosynthesis. This reaction introduces a second double bond into the aromatic ring system.</text>
</comment>
<comment type="catalytic activity">
    <reaction evidence="1">
        <text>5-O-(1-carboxyvinyl)-3-phosphoshikimate = chorismate + phosphate</text>
        <dbReference type="Rhea" id="RHEA:21020"/>
        <dbReference type="ChEBI" id="CHEBI:29748"/>
        <dbReference type="ChEBI" id="CHEBI:43474"/>
        <dbReference type="ChEBI" id="CHEBI:57701"/>
        <dbReference type="EC" id="4.2.3.5"/>
    </reaction>
</comment>
<comment type="cofactor">
    <cofactor evidence="1">
        <name>FMNH2</name>
        <dbReference type="ChEBI" id="CHEBI:57618"/>
    </cofactor>
    <text evidence="1">Reduced FMN (FMNH(2)).</text>
</comment>
<comment type="pathway">
    <text evidence="1">Metabolic intermediate biosynthesis; chorismate biosynthesis; chorismate from D-erythrose 4-phosphate and phosphoenolpyruvate: step 7/7.</text>
</comment>
<comment type="subunit">
    <text evidence="1">Homotetramer.</text>
</comment>
<comment type="similarity">
    <text evidence="1">Belongs to the chorismate synthase family.</text>
</comment>
<dbReference type="EC" id="4.2.3.5" evidence="1"/>
<dbReference type="EMBL" id="CP000001">
    <property type="protein sequence ID" value="AAU17585.1"/>
    <property type="molecule type" value="Genomic_DNA"/>
</dbReference>
<dbReference type="RefSeq" id="WP_001269432.1">
    <property type="nucleotide sequence ID" value="NC_006274.1"/>
</dbReference>
<dbReference type="SMR" id="Q63A04"/>
<dbReference type="KEGG" id="bcz:BCE33L2676"/>
<dbReference type="PATRIC" id="fig|288681.22.peg.2787"/>
<dbReference type="UniPathway" id="UPA00053">
    <property type="reaction ID" value="UER00090"/>
</dbReference>
<dbReference type="Proteomes" id="UP000002612">
    <property type="component" value="Chromosome"/>
</dbReference>
<dbReference type="GO" id="GO:0005829">
    <property type="term" value="C:cytosol"/>
    <property type="evidence" value="ECO:0007669"/>
    <property type="project" value="TreeGrafter"/>
</dbReference>
<dbReference type="GO" id="GO:0004107">
    <property type="term" value="F:chorismate synthase activity"/>
    <property type="evidence" value="ECO:0007669"/>
    <property type="project" value="UniProtKB-UniRule"/>
</dbReference>
<dbReference type="GO" id="GO:0010181">
    <property type="term" value="F:FMN binding"/>
    <property type="evidence" value="ECO:0007669"/>
    <property type="project" value="TreeGrafter"/>
</dbReference>
<dbReference type="GO" id="GO:0008652">
    <property type="term" value="P:amino acid biosynthetic process"/>
    <property type="evidence" value="ECO:0007669"/>
    <property type="project" value="UniProtKB-KW"/>
</dbReference>
<dbReference type="GO" id="GO:0009073">
    <property type="term" value="P:aromatic amino acid family biosynthetic process"/>
    <property type="evidence" value="ECO:0007669"/>
    <property type="project" value="UniProtKB-KW"/>
</dbReference>
<dbReference type="GO" id="GO:0009423">
    <property type="term" value="P:chorismate biosynthetic process"/>
    <property type="evidence" value="ECO:0007669"/>
    <property type="project" value="UniProtKB-UniRule"/>
</dbReference>
<dbReference type="CDD" id="cd07304">
    <property type="entry name" value="Chorismate_synthase"/>
    <property type="match status" value="1"/>
</dbReference>
<dbReference type="FunFam" id="3.60.150.10:FF:000002">
    <property type="entry name" value="Chorismate synthase"/>
    <property type="match status" value="1"/>
</dbReference>
<dbReference type="Gene3D" id="3.60.150.10">
    <property type="entry name" value="Chorismate synthase AroC"/>
    <property type="match status" value="1"/>
</dbReference>
<dbReference type="HAMAP" id="MF_00300">
    <property type="entry name" value="Chorismate_synth"/>
    <property type="match status" value="1"/>
</dbReference>
<dbReference type="InterPro" id="IPR000453">
    <property type="entry name" value="Chorismate_synth"/>
</dbReference>
<dbReference type="InterPro" id="IPR035904">
    <property type="entry name" value="Chorismate_synth_AroC_sf"/>
</dbReference>
<dbReference type="InterPro" id="IPR020541">
    <property type="entry name" value="Chorismate_synthase_CS"/>
</dbReference>
<dbReference type="NCBIfam" id="TIGR00033">
    <property type="entry name" value="aroC"/>
    <property type="match status" value="1"/>
</dbReference>
<dbReference type="NCBIfam" id="NF003793">
    <property type="entry name" value="PRK05382.1"/>
    <property type="match status" value="1"/>
</dbReference>
<dbReference type="NCBIfam" id="NF009113">
    <property type="entry name" value="PRK12463.1"/>
    <property type="match status" value="1"/>
</dbReference>
<dbReference type="PANTHER" id="PTHR21085">
    <property type="entry name" value="CHORISMATE SYNTHASE"/>
    <property type="match status" value="1"/>
</dbReference>
<dbReference type="PANTHER" id="PTHR21085:SF0">
    <property type="entry name" value="CHORISMATE SYNTHASE"/>
    <property type="match status" value="1"/>
</dbReference>
<dbReference type="Pfam" id="PF01264">
    <property type="entry name" value="Chorismate_synt"/>
    <property type="match status" value="1"/>
</dbReference>
<dbReference type="PIRSF" id="PIRSF001456">
    <property type="entry name" value="Chorismate_synth"/>
    <property type="match status" value="1"/>
</dbReference>
<dbReference type="SUPFAM" id="SSF103263">
    <property type="entry name" value="Chorismate synthase, AroC"/>
    <property type="match status" value="1"/>
</dbReference>
<dbReference type="PROSITE" id="PS00787">
    <property type="entry name" value="CHORISMATE_SYNTHASE_1"/>
    <property type="match status" value="1"/>
</dbReference>
<dbReference type="PROSITE" id="PS00788">
    <property type="entry name" value="CHORISMATE_SYNTHASE_2"/>
    <property type="match status" value="1"/>
</dbReference>
<dbReference type="PROSITE" id="PS00789">
    <property type="entry name" value="CHORISMATE_SYNTHASE_3"/>
    <property type="match status" value="1"/>
</dbReference>
<name>AROC2_BACCZ</name>
<organism>
    <name type="scientific">Bacillus cereus (strain ZK / E33L)</name>
    <dbReference type="NCBI Taxonomy" id="288681"/>
    <lineage>
        <taxon>Bacteria</taxon>
        <taxon>Bacillati</taxon>
        <taxon>Bacillota</taxon>
        <taxon>Bacilli</taxon>
        <taxon>Bacillales</taxon>
        <taxon>Bacillaceae</taxon>
        <taxon>Bacillus</taxon>
        <taxon>Bacillus cereus group</taxon>
    </lineage>
</organism>
<evidence type="ECO:0000255" key="1">
    <source>
        <dbReference type="HAMAP-Rule" id="MF_00300"/>
    </source>
</evidence>
<sequence>MRYITAGESHGPQLTVILEGVPAGLTLTAEHINKELLRRQKGHGRGRRMQIETDTVEIVSGVRHGMTLGSPITLIVKNDDFKHWTKVMGAEPISEKESKEMKRTITKPRPGHADLNGAIKYGHRDIRNVLERSSARETTVRVAAGAVAKQILKELGVEIAGHVLEIGGVEAKHISNLSIEEIQTITENSPVRCLDKTVEQEMMDAIDNAKSSGDSIGGIVEVIAEGMPIGVGSYVHYDRKLDAKLAGAIMSINAFKGAEIGVGFEAARQPGSKVHDEILWDEEQGYTRKTNNAGGLEGGMTTGMPIVVRGVMKPIPTLYKPLASVDIDTKEAFQASIERSDSCAVPAAGVVAESVVAWELAHALVEQFGKDRMELIQQNITQHNKYAKEF</sequence>
<keyword id="KW-0028">Amino-acid biosynthesis</keyword>
<keyword id="KW-0057">Aromatic amino acid biosynthesis</keyword>
<keyword id="KW-0274">FAD</keyword>
<keyword id="KW-0285">Flavoprotein</keyword>
<keyword id="KW-0288">FMN</keyword>
<keyword id="KW-0456">Lyase</keyword>
<keyword id="KW-0521">NADP</keyword>
<protein>
    <recommendedName>
        <fullName evidence="1">Chorismate synthase 2</fullName>
        <shortName evidence="1">CS 2</shortName>
        <ecNumber evidence="1">4.2.3.5</ecNumber>
    </recommendedName>
    <alternativeName>
        <fullName evidence="1">5-enolpyruvylshikimate-3-phosphate phospholyase 2</fullName>
    </alternativeName>
</protein>
<proteinExistence type="inferred from homology"/>